<proteinExistence type="evidence at transcript level"/>
<protein>
    <recommendedName>
        <fullName>U-box domain-containing protein 36</fullName>
        <ecNumber>2.3.2.27</ecNumber>
    </recommendedName>
    <alternativeName>
        <fullName>Plant U-box protein 36</fullName>
    </alternativeName>
    <alternativeName>
        <fullName evidence="3">RING-type E3 ubiquitin transferase PUB36</fullName>
    </alternativeName>
</protein>
<name>PUB36_ARATH</name>
<feature type="chain" id="PRO_0000322176" description="U-box domain-containing protein 36">
    <location>
        <begin position="1"/>
        <end position="435"/>
    </location>
</feature>
<feature type="domain" description="U-box">
    <location>
        <begin position="352"/>
        <end position="426"/>
    </location>
</feature>
<feature type="coiled-coil region" evidence="2">
    <location>
        <begin position="227"/>
        <end position="345"/>
    </location>
</feature>
<feature type="sequence conflict" description="In Ref. 3; BAC41832 and 4; AAO63431." evidence="3" ref="3 4">
    <location>
        <position position="181"/>
    </location>
</feature>
<reference key="1">
    <citation type="journal article" date="2000" name="Nature">
        <title>Sequence and analysis of chromosome 3 of the plant Arabidopsis thaliana.</title>
        <authorList>
            <person name="Salanoubat M."/>
            <person name="Lemcke K."/>
            <person name="Rieger M."/>
            <person name="Ansorge W."/>
            <person name="Unseld M."/>
            <person name="Fartmann B."/>
            <person name="Valle G."/>
            <person name="Bloecker H."/>
            <person name="Perez-Alonso M."/>
            <person name="Obermaier B."/>
            <person name="Delseny M."/>
            <person name="Boutry M."/>
            <person name="Grivell L.A."/>
            <person name="Mache R."/>
            <person name="Puigdomenech P."/>
            <person name="De Simone V."/>
            <person name="Choisne N."/>
            <person name="Artiguenave F."/>
            <person name="Robert C."/>
            <person name="Brottier P."/>
            <person name="Wincker P."/>
            <person name="Cattolico L."/>
            <person name="Weissenbach J."/>
            <person name="Saurin W."/>
            <person name="Quetier F."/>
            <person name="Schaefer M."/>
            <person name="Mueller-Auer S."/>
            <person name="Gabel C."/>
            <person name="Fuchs M."/>
            <person name="Benes V."/>
            <person name="Wurmbach E."/>
            <person name="Drzonek H."/>
            <person name="Erfle H."/>
            <person name="Jordan N."/>
            <person name="Bangert S."/>
            <person name="Wiedelmann R."/>
            <person name="Kranz H."/>
            <person name="Voss H."/>
            <person name="Holland R."/>
            <person name="Brandt P."/>
            <person name="Nyakatura G."/>
            <person name="Vezzi A."/>
            <person name="D'Angelo M."/>
            <person name="Pallavicini A."/>
            <person name="Toppo S."/>
            <person name="Simionati B."/>
            <person name="Conrad A."/>
            <person name="Hornischer K."/>
            <person name="Kauer G."/>
            <person name="Loehnert T.-H."/>
            <person name="Nordsiek G."/>
            <person name="Reichelt J."/>
            <person name="Scharfe M."/>
            <person name="Schoen O."/>
            <person name="Bargues M."/>
            <person name="Terol J."/>
            <person name="Climent J."/>
            <person name="Navarro P."/>
            <person name="Collado C."/>
            <person name="Perez-Perez A."/>
            <person name="Ottenwaelder B."/>
            <person name="Duchemin D."/>
            <person name="Cooke R."/>
            <person name="Laudie M."/>
            <person name="Berger-Llauro C."/>
            <person name="Purnelle B."/>
            <person name="Masuy D."/>
            <person name="de Haan M."/>
            <person name="Maarse A.C."/>
            <person name="Alcaraz J.-P."/>
            <person name="Cottet A."/>
            <person name="Casacuberta E."/>
            <person name="Monfort A."/>
            <person name="Argiriou A."/>
            <person name="Flores M."/>
            <person name="Liguori R."/>
            <person name="Vitale D."/>
            <person name="Mannhaupt G."/>
            <person name="Haase D."/>
            <person name="Schoof H."/>
            <person name="Rudd S."/>
            <person name="Zaccaria P."/>
            <person name="Mewes H.-W."/>
            <person name="Mayer K.F.X."/>
            <person name="Kaul S."/>
            <person name="Town C.D."/>
            <person name="Koo H.L."/>
            <person name="Tallon L.J."/>
            <person name="Jenkins J."/>
            <person name="Rooney T."/>
            <person name="Rizzo M."/>
            <person name="Walts A."/>
            <person name="Utterback T."/>
            <person name="Fujii C.Y."/>
            <person name="Shea T.P."/>
            <person name="Creasy T.H."/>
            <person name="Haas B."/>
            <person name="Maiti R."/>
            <person name="Wu D."/>
            <person name="Peterson J."/>
            <person name="Van Aken S."/>
            <person name="Pai G."/>
            <person name="Militscher J."/>
            <person name="Sellers P."/>
            <person name="Gill J.E."/>
            <person name="Feldblyum T.V."/>
            <person name="Preuss D."/>
            <person name="Lin X."/>
            <person name="Nierman W.C."/>
            <person name="Salzberg S.L."/>
            <person name="White O."/>
            <person name="Venter J.C."/>
            <person name="Fraser C.M."/>
            <person name="Kaneko T."/>
            <person name="Nakamura Y."/>
            <person name="Sato S."/>
            <person name="Kato T."/>
            <person name="Asamizu E."/>
            <person name="Sasamoto S."/>
            <person name="Kimura T."/>
            <person name="Idesawa K."/>
            <person name="Kawashima K."/>
            <person name="Kishida Y."/>
            <person name="Kiyokawa C."/>
            <person name="Kohara M."/>
            <person name="Matsumoto M."/>
            <person name="Matsuno A."/>
            <person name="Muraki A."/>
            <person name="Nakayama S."/>
            <person name="Nakazaki N."/>
            <person name="Shinpo S."/>
            <person name="Takeuchi C."/>
            <person name="Wada T."/>
            <person name="Watanabe A."/>
            <person name="Yamada M."/>
            <person name="Yasuda M."/>
            <person name="Tabata S."/>
        </authorList>
    </citation>
    <scope>NUCLEOTIDE SEQUENCE [LARGE SCALE GENOMIC DNA]</scope>
    <source>
        <strain>cv. Columbia</strain>
    </source>
</reference>
<reference key="2">
    <citation type="journal article" date="2017" name="Plant J.">
        <title>Araport11: a complete reannotation of the Arabidopsis thaliana reference genome.</title>
        <authorList>
            <person name="Cheng C.Y."/>
            <person name="Krishnakumar V."/>
            <person name="Chan A.P."/>
            <person name="Thibaud-Nissen F."/>
            <person name="Schobel S."/>
            <person name="Town C.D."/>
        </authorList>
    </citation>
    <scope>GENOME REANNOTATION</scope>
    <source>
        <strain>cv. Columbia</strain>
    </source>
</reference>
<reference key="3">
    <citation type="journal article" date="2002" name="Science">
        <title>Functional annotation of a full-length Arabidopsis cDNA collection.</title>
        <authorList>
            <person name="Seki M."/>
            <person name="Narusaka M."/>
            <person name="Kamiya A."/>
            <person name="Ishida J."/>
            <person name="Satou M."/>
            <person name="Sakurai T."/>
            <person name="Nakajima M."/>
            <person name="Enju A."/>
            <person name="Akiyama K."/>
            <person name="Oono Y."/>
            <person name="Muramatsu M."/>
            <person name="Hayashizaki Y."/>
            <person name="Kawai J."/>
            <person name="Carninci P."/>
            <person name="Itoh M."/>
            <person name="Ishii Y."/>
            <person name="Arakawa T."/>
            <person name="Shibata K."/>
            <person name="Shinagawa A."/>
            <person name="Shinozaki K."/>
        </authorList>
    </citation>
    <scope>NUCLEOTIDE SEQUENCE [LARGE SCALE MRNA]</scope>
    <source>
        <strain>cv. Columbia</strain>
    </source>
</reference>
<reference key="4">
    <citation type="journal article" date="2003" name="Science">
        <title>Empirical analysis of transcriptional activity in the Arabidopsis genome.</title>
        <authorList>
            <person name="Yamada K."/>
            <person name="Lim J."/>
            <person name="Dale J.M."/>
            <person name="Chen H."/>
            <person name="Shinn P."/>
            <person name="Palm C.J."/>
            <person name="Southwick A.M."/>
            <person name="Wu H.C."/>
            <person name="Kim C.J."/>
            <person name="Nguyen M."/>
            <person name="Pham P.K."/>
            <person name="Cheuk R.F."/>
            <person name="Karlin-Newmann G."/>
            <person name="Liu S.X."/>
            <person name="Lam B."/>
            <person name="Sakano H."/>
            <person name="Wu T."/>
            <person name="Yu G."/>
            <person name="Miranda M."/>
            <person name="Quach H.L."/>
            <person name="Tripp M."/>
            <person name="Chang C.H."/>
            <person name="Lee J.M."/>
            <person name="Toriumi M.J."/>
            <person name="Chan M.M."/>
            <person name="Tang C.C."/>
            <person name="Onodera C.S."/>
            <person name="Deng J.M."/>
            <person name="Akiyama K."/>
            <person name="Ansari Y."/>
            <person name="Arakawa T."/>
            <person name="Banh J."/>
            <person name="Banno F."/>
            <person name="Bowser L."/>
            <person name="Brooks S.Y."/>
            <person name="Carninci P."/>
            <person name="Chao Q."/>
            <person name="Choy N."/>
            <person name="Enju A."/>
            <person name="Goldsmith A.D."/>
            <person name="Gurjal M."/>
            <person name="Hansen N.F."/>
            <person name="Hayashizaki Y."/>
            <person name="Johnson-Hopson C."/>
            <person name="Hsuan V.W."/>
            <person name="Iida K."/>
            <person name="Karnes M."/>
            <person name="Khan S."/>
            <person name="Koesema E."/>
            <person name="Ishida J."/>
            <person name="Jiang P.X."/>
            <person name="Jones T."/>
            <person name="Kawai J."/>
            <person name="Kamiya A."/>
            <person name="Meyers C."/>
            <person name="Nakajima M."/>
            <person name="Narusaka M."/>
            <person name="Seki M."/>
            <person name="Sakurai T."/>
            <person name="Satou M."/>
            <person name="Tamse R."/>
            <person name="Vaysberg M."/>
            <person name="Wallender E.K."/>
            <person name="Wong C."/>
            <person name="Yamamura Y."/>
            <person name="Yuan S."/>
            <person name="Shinozaki K."/>
            <person name="Davis R.W."/>
            <person name="Theologis A."/>
            <person name="Ecker J.R."/>
        </authorList>
    </citation>
    <scope>NUCLEOTIDE SEQUENCE [LARGE SCALE MRNA]</scope>
    <source>
        <strain>cv. Columbia</strain>
    </source>
</reference>
<reference key="5">
    <citation type="journal article" date="2001" name="Trends Plant Sci.">
        <title>The U-box protein family in plants.</title>
        <authorList>
            <person name="Azevedo C."/>
            <person name="Santos-Rosa M.J."/>
            <person name="Shirasu K."/>
        </authorList>
    </citation>
    <scope>GENE FAMILY ORGANIZATION</scope>
    <scope>NOMENCLATURE</scope>
</reference>
<organism>
    <name type="scientific">Arabidopsis thaliana</name>
    <name type="common">Mouse-ear cress</name>
    <dbReference type="NCBI Taxonomy" id="3702"/>
    <lineage>
        <taxon>Eukaryota</taxon>
        <taxon>Viridiplantae</taxon>
        <taxon>Streptophyta</taxon>
        <taxon>Embryophyta</taxon>
        <taxon>Tracheophyta</taxon>
        <taxon>Spermatophyta</taxon>
        <taxon>Magnoliopsida</taxon>
        <taxon>eudicotyledons</taxon>
        <taxon>Gunneridae</taxon>
        <taxon>Pentapetalae</taxon>
        <taxon>rosids</taxon>
        <taxon>malvids</taxon>
        <taxon>Brassicales</taxon>
        <taxon>Brassicaceae</taxon>
        <taxon>Camelineae</taxon>
        <taxon>Arabidopsis</taxon>
    </lineage>
</organism>
<evidence type="ECO:0000250" key="1"/>
<evidence type="ECO:0000255" key="2"/>
<evidence type="ECO:0000305" key="3"/>
<gene>
    <name type="primary">PUB36</name>
    <name type="ordered locus">At3g61390</name>
    <name type="ORF">F2A19.1</name>
    <name type="ORF">T20K12.290</name>
</gene>
<sequence>MTLKIPIQEMVKMVGSLRSHGIDIPESMEINKKEKIYVAVTEKDLESKSSLVWAIQNSGGKEFCIVHVHQPIPGEMFHEQKLRLYRKEKDKAHKNSEKYLQICRQMQVTAEIIYIETDSVEKGILQLISQRGVTKLVMGAAADRHYSMRMRDLKSKKAIYIHREAPATCLIWFTCNGYLICSREARRANNLYLECASSNSLSQSDITRGTESIVKDDDHLIKLAVTEAEASKRKARFEACKREEAEKTAVDALKKAKQWENVYFEELKQRKETEKALRKRNDELEKMRSESETQITESYTVIRKLQEKNNLSMETFRGIREEQEELKIKLREVSKLKGKREEEEASTSNHREPPQYFICPITHDIMEDPHVAADGFTYEGEAISRWFERGHETSPMINKRLPHTSLVPNLALRSAIQEWLQLRELLNRPSACREI</sequence>
<keyword id="KW-0025">Alternative splicing</keyword>
<keyword id="KW-0175">Coiled coil</keyword>
<keyword id="KW-1185">Reference proteome</keyword>
<keyword id="KW-0808">Transferase</keyword>
<keyword id="KW-0833">Ubl conjugation pathway</keyword>
<comment type="function">
    <text evidence="1">Functions as an E3 ubiquitin ligase.</text>
</comment>
<comment type="catalytic activity">
    <reaction>
        <text>S-ubiquitinyl-[E2 ubiquitin-conjugating enzyme]-L-cysteine + [acceptor protein]-L-lysine = [E2 ubiquitin-conjugating enzyme]-L-cysteine + N(6)-ubiquitinyl-[acceptor protein]-L-lysine.</text>
        <dbReference type="EC" id="2.3.2.27"/>
    </reaction>
</comment>
<comment type="pathway">
    <text>Protein modification; protein ubiquitination.</text>
</comment>
<comment type="alternative products">
    <event type="alternative splicing"/>
    <isoform>
        <id>Q8GZ84-1</id>
        <name>1</name>
        <sequence type="displayed"/>
    </isoform>
    <text>A number of isoforms are produced. According to EST sequences.</text>
</comment>
<comment type="sequence caution" evidence="3">
    <conflict type="erroneous initiation">
        <sequence resource="EMBL-CDS" id="CAB71069"/>
    </conflict>
</comment>
<dbReference type="EC" id="2.3.2.27"/>
<dbReference type="EMBL" id="AL132962">
    <property type="status" value="NOT_ANNOTATED_CDS"/>
    <property type="molecule type" value="Genomic_DNA"/>
</dbReference>
<dbReference type="EMBL" id="AL137898">
    <property type="protein sequence ID" value="CAB71069.1"/>
    <property type="status" value="ALT_INIT"/>
    <property type="molecule type" value="Genomic_DNA"/>
</dbReference>
<dbReference type="EMBL" id="CP002686">
    <property type="protein sequence ID" value="AEE80195.1"/>
    <property type="molecule type" value="Genomic_DNA"/>
</dbReference>
<dbReference type="EMBL" id="AK117154">
    <property type="protein sequence ID" value="BAC41832.1"/>
    <property type="molecule type" value="mRNA"/>
</dbReference>
<dbReference type="EMBL" id="BT005367">
    <property type="protein sequence ID" value="AAO63431.1"/>
    <property type="molecule type" value="mRNA"/>
</dbReference>
<dbReference type="PIR" id="T47931">
    <property type="entry name" value="T47931"/>
</dbReference>
<dbReference type="RefSeq" id="NP_191698.2">
    <molecule id="Q8GZ84-1"/>
    <property type="nucleotide sequence ID" value="NM_116003.3"/>
</dbReference>
<dbReference type="SMR" id="Q8GZ84"/>
<dbReference type="PaxDb" id="3702-AT3G61390.2"/>
<dbReference type="EnsemblPlants" id="AT3G61390.2">
    <molecule id="Q8GZ84-1"/>
    <property type="protein sequence ID" value="AT3G61390.2"/>
    <property type="gene ID" value="AT3G61390"/>
</dbReference>
<dbReference type="GeneID" id="825311"/>
<dbReference type="Gramene" id="AT3G61390.2">
    <molecule id="Q8GZ84-1"/>
    <property type="protein sequence ID" value="AT3G61390.2"/>
    <property type="gene ID" value="AT3G61390"/>
</dbReference>
<dbReference type="KEGG" id="ath:AT3G61390"/>
<dbReference type="Araport" id="AT3G61390"/>
<dbReference type="TAIR" id="AT3G61390"/>
<dbReference type="eggNOG" id="ENOG502SN9F">
    <property type="taxonomic scope" value="Eukaryota"/>
</dbReference>
<dbReference type="HOGENOM" id="CLU_036548_0_0_1"/>
<dbReference type="InParanoid" id="Q8GZ84"/>
<dbReference type="OMA" id="CTREAKV"/>
<dbReference type="PhylomeDB" id="Q8GZ84"/>
<dbReference type="UniPathway" id="UPA00143"/>
<dbReference type="PRO" id="PR:Q8GZ84"/>
<dbReference type="Proteomes" id="UP000006548">
    <property type="component" value="Chromosome 3"/>
</dbReference>
<dbReference type="ExpressionAtlas" id="Q8GZ84">
    <property type="expression patterns" value="baseline and differential"/>
</dbReference>
<dbReference type="GO" id="GO:0004842">
    <property type="term" value="F:ubiquitin-protein transferase activity"/>
    <property type="evidence" value="ECO:0007669"/>
    <property type="project" value="InterPro"/>
</dbReference>
<dbReference type="GO" id="GO:0016567">
    <property type="term" value="P:protein ubiquitination"/>
    <property type="evidence" value="ECO:0007669"/>
    <property type="project" value="UniProtKB-UniPathway"/>
</dbReference>
<dbReference type="CDD" id="cd16655">
    <property type="entry name" value="RING-Ubox_WDSUB1-like"/>
    <property type="match status" value="1"/>
</dbReference>
<dbReference type="CDD" id="cd01989">
    <property type="entry name" value="USP_STK_Ubox_N"/>
    <property type="match status" value="1"/>
</dbReference>
<dbReference type="Gene3D" id="3.40.50.620">
    <property type="entry name" value="HUPs"/>
    <property type="match status" value="1"/>
</dbReference>
<dbReference type="Gene3D" id="3.30.40.10">
    <property type="entry name" value="Zinc/RING finger domain, C3HC4 (zinc finger)"/>
    <property type="match status" value="1"/>
</dbReference>
<dbReference type="InterPro" id="IPR014729">
    <property type="entry name" value="Rossmann-like_a/b/a_fold"/>
</dbReference>
<dbReference type="InterPro" id="IPR051348">
    <property type="entry name" value="U-box_ubiquitin_ligases"/>
</dbReference>
<dbReference type="InterPro" id="IPR003613">
    <property type="entry name" value="Ubox_domain"/>
</dbReference>
<dbReference type="InterPro" id="IPR013083">
    <property type="entry name" value="Znf_RING/FYVE/PHD"/>
</dbReference>
<dbReference type="PANTHER" id="PTHR45647">
    <property type="entry name" value="OS02G0152300 PROTEIN"/>
    <property type="match status" value="1"/>
</dbReference>
<dbReference type="PANTHER" id="PTHR45647:SF100">
    <property type="entry name" value="U-BOX DOMAIN-CONTAINING PROTEIN 33"/>
    <property type="match status" value="1"/>
</dbReference>
<dbReference type="Pfam" id="PF04564">
    <property type="entry name" value="U-box"/>
    <property type="match status" value="1"/>
</dbReference>
<dbReference type="SMART" id="SM00504">
    <property type="entry name" value="Ubox"/>
    <property type="match status" value="1"/>
</dbReference>
<dbReference type="SUPFAM" id="SSF52402">
    <property type="entry name" value="Adenine nucleotide alpha hydrolases-like"/>
    <property type="match status" value="1"/>
</dbReference>
<dbReference type="SUPFAM" id="SSF57850">
    <property type="entry name" value="RING/U-box"/>
    <property type="match status" value="1"/>
</dbReference>
<dbReference type="PROSITE" id="PS51698">
    <property type="entry name" value="U_BOX"/>
    <property type="match status" value="1"/>
</dbReference>
<accession>Q8GZ84</accession>
<accession>Q9M2C5</accession>